<reference key="1">
    <citation type="journal article" date="2008" name="BMC Genomics">
        <title>The genome sequence of the fish pathogen Aliivibrio salmonicida strain LFI1238 shows extensive evidence of gene decay.</title>
        <authorList>
            <person name="Hjerde E."/>
            <person name="Lorentzen M.S."/>
            <person name="Holden M.T."/>
            <person name="Seeger K."/>
            <person name="Paulsen S."/>
            <person name="Bason N."/>
            <person name="Churcher C."/>
            <person name="Harris D."/>
            <person name="Norbertczak H."/>
            <person name="Quail M.A."/>
            <person name="Sanders S."/>
            <person name="Thurston S."/>
            <person name="Parkhill J."/>
            <person name="Willassen N.P."/>
            <person name="Thomson N.R."/>
        </authorList>
    </citation>
    <scope>NUCLEOTIDE SEQUENCE [LARGE SCALE GENOMIC DNA]</scope>
    <source>
        <strain>LFI1238</strain>
    </source>
</reference>
<proteinExistence type="inferred from homology"/>
<name>Y2547_ALISL</name>
<gene>
    <name type="ordered locus">VSAL_I2547</name>
</gene>
<dbReference type="EMBL" id="FM178379">
    <property type="protein sequence ID" value="CAQ80231.1"/>
    <property type="molecule type" value="Genomic_DNA"/>
</dbReference>
<dbReference type="RefSeq" id="WP_012551018.1">
    <property type="nucleotide sequence ID" value="NC_011312.1"/>
</dbReference>
<dbReference type="SMR" id="B6EKX9"/>
<dbReference type="KEGG" id="vsa:VSAL_I2547"/>
<dbReference type="eggNOG" id="COG3022">
    <property type="taxonomic scope" value="Bacteria"/>
</dbReference>
<dbReference type="HOGENOM" id="CLU_061989_0_0_6"/>
<dbReference type="Proteomes" id="UP000001730">
    <property type="component" value="Chromosome 1"/>
</dbReference>
<dbReference type="GO" id="GO:0005829">
    <property type="term" value="C:cytosol"/>
    <property type="evidence" value="ECO:0007669"/>
    <property type="project" value="TreeGrafter"/>
</dbReference>
<dbReference type="GO" id="GO:0033194">
    <property type="term" value="P:response to hydroperoxide"/>
    <property type="evidence" value="ECO:0007669"/>
    <property type="project" value="TreeGrafter"/>
</dbReference>
<dbReference type="HAMAP" id="MF_00652">
    <property type="entry name" value="UPF0246"/>
    <property type="match status" value="1"/>
</dbReference>
<dbReference type="InterPro" id="IPR005583">
    <property type="entry name" value="YaaA"/>
</dbReference>
<dbReference type="NCBIfam" id="NF002541">
    <property type="entry name" value="PRK02101.1-1"/>
    <property type="match status" value="1"/>
</dbReference>
<dbReference type="NCBIfam" id="NF002542">
    <property type="entry name" value="PRK02101.1-3"/>
    <property type="match status" value="1"/>
</dbReference>
<dbReference type="PANTHER" id="PTHR30283:SF4">
    <property type="entry name" value="PEROXIDE STRESS RESISTANCE PROTEIN YAAA"/>
    <property type="match status" value="1"/>
</dbReference>
<dbReference type="PANTHER" id="PTHR30283">
    <property type="entry name" value="PEROXIDE STRESS RESPONSE PROTEIN YAAA"/>
    <property type="match status" value="1"/>
</dbReference>
<dbReference type="Pfam" id="PF03883">
    <property type="entry name" value="H2O2_YaaD"/>
    <property type="match status" value="1"/>
</dbReference>
<accession>B6EKX9</accession>
<organism>
    <name type="scientific">Aliivibrio salmonicida (strain LFI1238)</name>
    <name type="common">Vibrio salmonicida (strain LFI1238)</name>
    <dbReference type="NCBI Taxonomy" id="316275"/>
    <lineage>
        <taxon>Bacteria</taxon>
        <taxon>Pseudomonadati</taxon>
        <taxon>Pseudomonadota</taxon>
        <taxon>Gammaproteobacteria</taxon>
        <taxon>Vibrionales</taxon>
        <taxon>Vibrionaceae</taxon>
        <taxon>Aliivibrio</taxon>
    </lineage>
</organism>
<evidence type="ECO:0000255" key="1">
    <source>
        <dbReference type="HAMAP-Rule" id="MF_00652"/>
    </source>
</evidence>
<feature type="chain" id="PRO_1000131098" description="UPF0246 protein VSAL_I2547">
    <location>
        <begin position="1"/>
        <end position="259"/>
    </location>
</feature>
<protein>
    <recommendedName>
        <fullName evidence="1">UPF0246 protein VSAL_I2547</fullName>
    </recommendedName>
</protein>
<comment type="similarity">
    <text evidence="1">Belongs to the UPF0246 family.</text>
</comment>
<sequence length="259" mass="29481">MLIVVSPAKTLDYESPLATDLSTQPDFIADSEELIHVCRKLTPLDISSLMKVSDKIASLNAIRFEEWSPIFTSDNSRQALFAFKGDVYTGLDAASFSDDDFDYAQRHLRMLSGLYGLLKPLDLMQPYRLEMGTKLANDRGANLYQFWGNKITEKLNAAIEEQGDKTLINLASNEYFKAVKPALLNADVITPIFKDCKNGQYKIISFYAKKARGLMARFIIENRIATIEELKRFAVDGYYFVSAESSEKELMFKREEQFK</sequence>